<accession>A9W5L3</accession>
<comment type="function">
    <text evidence="1">Hydrolyzes ribosome-free peptidyl-tRNAs (with 1 or more amino acids incorporated), which drop off the ribosome during protein synthesis, or as a result of ribosome stalling.</text>
</comment>
<comment type="function">
    <text evidence="1">Catalyzes the release of premature peptidyl moieties from peptidyl-tRNA molecules trapped in stalled 50S ribosomal subunits, and thus maintains levels of free tRNAs and 50S ribosomes.</text>
</comment>
<comment type="catalytic activity">
    <reaction evidence="1">
        <text>an N-acyl-L-alpha-aminoacyl-tRNA + H2O = an N-acyl-L-amino acid + a tRNA + H(+)</text>
        <dbReference type="Rhea" id="RHEA:54448"/>
        <dbReference type="Rhea" id="RHEA-COMP:10123"/>
        <dbReference type="Rhea" id="RHEA-COMP:13883"/>
        <dbReference type="ChEBI" id="CHEBI:15377"/>
        <dbReference type="ChEBI" id="CHEBI:15378"/>
        <dbReference type="ChEBI" id="CHEBI:59874"/>
        <dbReference type="ChEBI" id="CHEBI:78442"/>
        <dbReference type="ChEBI" id="CHEBI:138191"/>
        <dbReference type="EC" id="3.1.1.29"/>
    </reaction>
</comment>
<comment type="subunit">
    <text evidence="1">Monomer.</text>
</comment>
<comment type="subcellular location">
    <subcellularLocation>
        <location evidence="1">Cytoplasm</location>
    </subcellularLocation>
</comment>
<comment type="similarity">
    <text evidence="1">Belongs to the PTH family.</text>
</comment>
<protein>
    <recommendedName>
        <fullName evidence="1">Peptidyl-tRNA hydrolase</fullName>
        <shortName evidence="1">Pth</shortName>
        <ecNumber evidence="1">3.1.1.29</ecNumber>
    </recommendedName>
</protein>
<sequence>MRLIVGLGNPGARYARNRHNIGFMAVDEIARVHRAAPFRRRFQGEAAEVMLGSERAILLKPQTFMNESGRSVGEAQRFFKIPLADVIVLHDELDLAPAKLRVKLGGGNAGHNGLRSITALCGNEYRRVRLGIGHPGDKALVHAYVLNDFAKSEEPWVEDLCRATADHAPLLAAGEDASFQNKVHLAMAGRGWETVKTPAEAGKAKARDAN</sequence>
<gene>
    <name evidence="1" type="primary">pth</name>
    <name type="ordered locus">Mext_2474</name>
</gene>
<organism>
    <name type="scientific">Methylorubrum extorquens (strain PA1)</name>
    <name type="common">Methylobacterium extorquens</name>
    <dbReference type="NCBI Taxonomy" id="419610"/>
    <lineage>
        <taxon>Bacteria</taxon>
        <taxon>Pseudomonadati</taxon>
        <taxon>Pseudomonadota</taxon>
        <taxon>Alphaproteobacteria</taxon>
        <taxon>Hyphomicrobiales</taxon>
        <taxon>Methylobacteriaceae</taxon>
        <taxon>Methylorubrum</taxon>
    </lineage>
</organism>
<name>PTH_METEP</name>
<dbReference type="EC" id="3.1.1.29" evidence="1"/>
<dbReference type="EMBL" id="CP000908">
    <property type="protein sequence ID" value="ABY30869.1"/>
    <property type="molecule type" value="Genomic_DNA"/>
</dbReference>
<dbReference type="RefSeq" id="WP_003598133.1">
    <property type="nucleotide sequence ID" value="NC_010172.1"/>
</dbReference>
<dbReference type="SMR" id="A9W5L3"/>
<dbReference type="GeneID" id="72990105"/>
<dbReference type="KEGG" id="mex:Mext_2474"/>
<dbReference type="eggNOG" id="COG0193">
    <property type="taxonomic scope" value="Bacteria"/>
</dbReference>
<dbReference type="HOGENOM" id="CLU_062456_1_0_5"/>
<dbReference type="BioCyc" id="MEXT419610:MEXT_RS12480-MONOMER"/>
<dbReference type="GO" id="GO:0005737">
    <property type="term" value="C:cytoplasm"/>
    <property type="evidence" value="ECO:0007669"/>
    <property type="project" value="UniProtKB-SubCell"/>
</dbReference>
<dbReference type="GO" id="GO:0004045">
    <property type="term" value="F:peptidyl-tRNA hydrolase activity"/>
    <property type="evidence" value="ECO:0007669"/>
    <property type="project" value="UniProtKB-UniRule"/>
</dbReference>
<dbReference type="GO" id="GO:0000049">
    <property type="term" value="F:tRNA binding"/>
    <property type="evidence" value="ECO:0007669"/>
    <property type="project" value="UniProtKB-UniRule"/>
</dbReference>
<dbReference type="GO" id="GO:0006515">
    <property type="term" value="P:protein quality control for misfolded or incompletely synthesized proteins"/>
    <property type="evidence" value="ECO:0007669"/>
    <property type="project" value="UniProtKB-UniRule"/>
</dbReference>
<dbReference type="GO" id="GO:0072344">
    <property type="term" value="P:rescue of stalled ribosome"/>
    <property type="evidence" value="ECO:0007669"/>
    <property type="project" value="UniProtKB-UniRule"/>
</dbReference>
<dbReference type="CDD" id="cd00462">
    <property type="entry name" value="PTH"/>
    <property type="match status" value="1"/>
</dbReference>
<dbReference type="FunFam" id="3.40.50.1470:FF:000001">
    <property type="entry name" value="Peptidyl-tRNA hydrolase"/>
    <property type="match status" value="1"/>
</dbReference>
<dbReference type="Gene3D" id="3.40.50.1470">
    <property type="entry name" value="Peptidyl-tRNA hydrolase"/>
    <property type="match status" value="1"/>
</dbReference>
<dbReference type="HAMAP" id="MF_00083">
    <property type="entry name" value="Pept_tRNA_hydro_bact"/>
    <property type="match status" value="1"/>
</dbReference>
<dbReference type="InterPro" id="IPR001328">
    <property type="entry name" value="Pept_tRNA_hydro"/>
</dbReference>
<dbReference type="InterPro" id="IPR018171">
    <property type="entry name" value="Pept_tRNA_hydro_CS"/>
</dbReference>
<dbReference type="InterPro" id="IPR036416">
    <property type="entry name" value="Pept_tRNA_hydro_sf"/>
</dbReference>
<dbReference type="NCBIfam" id="TIGR00447">
    <property type="entry name" value="pth"/>
    <property type="match status" value="1"/>
</dbReference>
<dbReference type="PANTHER" id="PTHR17224">
    <property type="entry name" value="PEPTIDYL-TRNA HYDROLASE"/>
    <property type="match status" value="1"/>
</dbReference>
<dbReference type="PANTHER" id="PTHR17224:SF1">
    <property type="entry name" value="PEPTIDYL-TRNA HYDROLASE"/>
    <property type="match status" value="1"/>
</dbReference>
<dbReference type="Pfam" id="PF01195">
    <property type="entry name" value="Pept_tRNA_hydro"/>
    <property type="match status" value="1"/>
</dbReference>
<dbReference type="SUPFAM" id="SSF53178">
    <property type="entry name" value="Peptidyl-tRNA hydrolase-like"/>
    <property type="match status" value="1"/>
</dbReference>
<dbReference type="PROSITE" id="PS01195">
    <property type="entry name" value="PEPT_TRNA_HYDROL_1"/>
    <property type="match status" value="1"/>
</dbReference>
<dbReference type="PROSITE" id="PS01196">
    <property type="entry name" value="PEPT_TRNA_HYDROL_2"/>
    <property type="match status" value="1"/>
</dbReference>
<reference key="1">
    <citation type="submission" date="2007-12" db="EMBL/GenBank/DDBJ databases">
        <title>Complete sequence of Methylobacterium extorquens PA1.</title>
        <authorList>
            <consortium name="US DOE Joint Genome Institute"/>
            <person name="Copeland A."/>
            <person name="Lucas S."/>
            <person name="Lapidus A."/>
            <person name="Barry K."/>
            <person name="Glavina del Rio T."/>
            <person name="Dalin E."/>
            <person name="Tice H."/>
            <person name="Pitluck S."/>
            <person name="Saunders E."/>
            <person name="Brettin T."/>
            <person name="Bruce D."/>
            <person name="Detter J.C."/>
            <person name="Han C."/>
            <person name="Schmutz J."/>
            <person name="Larimer F."/>
            <person name="Land M."/>
            <person name="Hauser L."/>
            <person name="Kyrpides N."/>
            <person name="Kim E."/>
            <person name="Marx C."/>
            <person name="Richardson P."/>
        </authorList>
    </citation>
    <scope>NUCLEOTIDE SEQUENCE [LARGE SCALE GENOMIC DNA]</scope>
    <source>
        <strain>PA1</strain>
    </source>
</reference>
<evidence type="ECO:0000255" key="1">
    <source>
        <dbReference type="HAMAP-Rule" id="MF_00083"/>
    </source>
</evidence>
<keyword id="KW-0963">Cytoplasm</keyword>
<keyword id="KW-0378">Hydrolase</keyword>
<keyword id="KW-0694">RNA-binding</keyword>
<keyword id="KW-0820">tRNA-binding</keyword>
<feature type="chain" id="PRO_1000092955" description="Peptidyl-tRNA hydrolase">
    <location>
        <begin position="1"/>
        <end position="210"/>
    </location>
</feature>
<feature type="active site" description="Proton acceptor" evidence="1">
    <location>
        <position position="19"/>
    </location>
</feature>
<feature type="binding site" evidence="1">
    <location>
        <position position="14"/>
    </location>
    <ligand>
        <name>tRNA</name>
        <dbReference type="ChEBI" id="CHEBI:17843"/>
    </ligand>
</feature>
<feature type="binding site" evidence="1">
    <location>
        <position position="64"/>
    </location>
    <ligand>
        <name>tRNA</name>
        <dbReference type="ChEBI" id="CHEBI:17843"/>
    </ligand>
</feature>
<feature type="binding site" evidence="1">
    <location>
        <position position="66"/>
    </location>
    <ligand>
        <name>tRNA</name>
        <dbReference type="ChEBI" id="CHEBI:17843"/>
    </ligand>
</feature>
<feature type="binding site" evidence="1">
    <location>
        <position position="112"/>
    </location>
    <ligand>
        <name>tRNA</name>
        <dbReference type="ChEBI" id="CHEBI:17843"/>
    </ligand>
</feature>
<feature type="site" description="Discriminates between blocked and unblocked aminoacyl-tRNA" evidence="1">
    <location>
        <position position="9"/>
    </location>
</feature>
<feature type="site" description="Stabilizes the basic form of H active site to accept a proton" evidence="1">
    <location>
        <position position="91"/>
    </location>
</feature>
<proteinExistence type="inferred from homology"/>